<proteinExistence type="evidence at protein level"/>
<evidence type="ECO:0000250" key="1">
    <source>
        <dbReference type="UniProtKB" id="P61887"/>
    </source>
</evidence>
<evidence type="ECO:0000269" key="2">
    <source>
    </source>
</evidence>
<evidence type="ECO:0000269" key="3">
    <source>
    </source>
</evidence>
<evidence type="ECO:0000303" key="4">
    <source>
    </source>
</evidence>
<evidence type="ECO:0000305" key="5"/>
<evidence type="ECO:0000305" key="6">
    <source>
    </source>
</evidence>
<evidence type="ECO:0007829" key="7">
    <source>
        <dbReference type="PDB" id="1IIM"/>
    </source>
</evidence>
<evidence type="ECO:0007829" key="8">
    <source>
        <dbReference type="PDB" id="1IIN"/>
    </source>
</evidence>
<evidence type="ECO:0007829" key="9">
    <source>
        <dbReference type="PDB" id="3PKP"/>
    </source>
</evidence>
<reference key="1">
    <citation type="journal article" date="1991" name="Mol. Microbiol.">
        <title>Structure and sequence of the rfb (O antigen) gene cluster of Salmonella serovar typhimurium (strain LT2).</title>
        <authorList>
            <person name="Jiang X.-M."/>
            <person name="Neal B."/>
            <person name="Santiago F."/>
            <person name="Lee S.J."/>
            <person name="Romana L.K."/>
            <person name="Reeves P.R."/>
        </authorList>
    </citation>
    <scope>NUCLEOTIDE SEQUENCE [GENOMIC DNA]</scope>
    <source>
        <strain>LT2</strain>
    </source>
</reference>
<reference key="2">
    <citation type="journal article" date="2001" name="Nature">
        <title>Complete genome sequence of Salmonella enterica serovar Typhimurium LT2.</title>
        <authorList>
            <person name="McClelland M."/>
            <person name="Sanderson K.E."/>
            <person name="Spieth J."/>
            <person name="Clifton S.W."/>
            <person name="Latreille P."/>
            <person name="Courtney L."/>
            <person name="Porwollik S."/>
            <person name="Ali J."/>
            <person name="Dante M."/>
            <person name="Du F."/>
            <person name="Hou S."/>
            <person name="Layman D."/>
            <person name="Leonard S."/>
            <person name="Nguyen C."/>
            <person name="Scott K."/>
            <person name="Holmes A."/>
            <person name="Grewal N."/>
            <person name="Mulvaney E."/>
            <person name="Ryan E."/>
            <person name="Sun H."/>
            <person name="Florea L."/>
            <person name="Miller W."/>
            <person name="Stoneking T."/>
            <person name="Nhan M."/>
            <person name="Waterston R."/>
            <person name="Wilson R.K."/>
        </authorList>
    </citation>
    <scope>NUCLEOTIDE SEQUENCE [LARGE SCALE GENOMIC DNA]</scope>
    <source>
        <strain>LT2 / SGSC1412 / ATCC 700720</strain>
    </source>
</reference>
<reference key="3">
    <citation type="journal article" date="1993" name="Eur. J. Biochem.">
        <title>Purification, characterization and HPLC assay of Salmonella glucose-1-phosphate thymidylyltransferase from the cloned rfbA gene.</title>
        <authorList>
            <person name="Lindquist L."/>
            <person name="Kaiser R."/>
            <person name="Reeves P.R."/>
            <person name="Lindberg A.A."/>
        </authorList>
    </citation>
    <scope>PROTEIN SEQUENCE OF 1-22</scope>
    <scope>FUNCTION</scope>
    <scope>CATALYTIC ACTIVITY</scope>
    <scope>SUBSTRATE SPECIFICITY</scope>
    <scope>BIOPHYSICOCHEMICAL PROPERTIES</scope>
    <scope>PATHWAY</scope>
    <source>
        <strain>LT2</strain>
    </source>
</reference>
<reference key="4">
    <citation type="journal article" date="2001" name="Nat. Struct. Biol.">
        <title>Structure, mechanism and engineering of a nucleotidylyltransferase as a first step toward glycorandomization.</title>
        <authorList>
            <person name="Barton W.A."/>
            <person name="Lesniak J."/>
            <person name="Biggins J.B."/>
            <person name="Jeffrey P.D."/>
            <person name="Jiang J."/>
            <person name="Rajashankar K.R."/>
            <person name="Thorson J.S."/>
            <person name="Nikolov D.B."/>
        </authorList>
    </citation>
    <scope>CHARACTERIZATION</scope>
    <scope>MUTAGENESIS OF THR-201 AND TRP-224</scope>
    <scope>X-RAY CRYSTALLOGRAPHY (2.1 ANGSTROMS) OF COMPLEXES WITH UDP-GLC AND DTTP</scope>
    <source>
        <strain>LT2</strain>
    </source>
</reference>
<gene>
    <name type="primary">rmlA</name>
    <name evidence="4" type="synonym">rfbA</name>
    <name type="ordered locus">STM2095</name>
</gene>
<name>RMLA_SALTY</name>
<keyword id="KW-0002">3D-structure</keyword>
<keyword id="KW-0903">Direct protein sequencing</keyword>
<keyword id="KW-0448">Lipopolysaccharide biosynthesis</keyword>
<keyword id="KW-0460">Magnesium</keyword>
<keyword id="KW-0479">Metal-binding</keyword>
<keyword id="KW-0548">Nucleotidyltransferase</keyword>
<keyword id="KW-1185">Reference proteome</keyword>
<keyword id="KW-0808">Transferase</keyword>
<dbReference type="EC" id="2.7.7.24" evidence="3"/>
<dbReference type="EMBL" id="X56793">
    <property type="protein sequence ID" value="CAA40117.1"/>
    <property type="molecule type" value="Genomic_DNA"/>
</dbReference>
<dbReference type="EMBL" id="AE006468">
    <property type="protein sequence ID" value="AAL20999.1"/>
    <property type="molecule type" value="Genomic_DNA"/>
</dbReference>
<dbReference type="PIR" id="S15301">
    <property type="entry name" value="S15301"/>
</dbReference>
<dbReference type="RefSeq" id="NP_461040.1">
    <property type="nucleotide sequence ID" value="NC_003197.2"/>
</dbReference>
<dbReference type="RefSeq" id="WP_000857529.1">
    <property type="nucleotide sequence ID" value="NC_003197.2"/>
</dbReference>
<dbReference type="PDB" id="1IIM">
    <property type="method" value="X-ray"/>
    <property type="resolution" value="2.10 A"/>
    <property type="chains" value="A/B=1-292"/>
</dbReference>
<dbReference type="PDB" id="1IIN">
    <property type="method" value="X-ray"/>
    <property type="resolution" value="2.10 A"/>
    <property type="chains" value="A/B/C/D=1-292"/>
</dbReference>
<dbReference type="PDB" id="1MP3">
    <property type="method" value="X-ray"/>
    <property type="resolution" value="2.20 A"/>
    <property type="chains" value="A/B=1-292"/>
</dbReference>
<dbReference type="PDB" id="1MP4">
    <property type="method" value="X-ray"/>
    <property type="resolution" value="2.20 A"/>
    <property type="chains" value="A/B=1-292"/>
</dbReference>
<dbReference type="PDB" id="1MP5">
    <property type="method" value="X-ray"/>
    <property type="resolution" value="2.75 A"/>
    <property type="chains" value="A/B/C/D=1-292"/>
</dbReference>
<dbReference type="PDB" id="3PKP">
    <property type="method" value="X-ray"/>
    <property type="resolution" value="2.60 A"/>
    <property type="chains" value="A/B/C/D/I/J/K/L=1-292"/>
</dbReference>
<dbReference type="PDB" id="3PKQ">
    <property type="method" value="X-ray"/>
    <property type="resolution" value="2.40 A"/>
    <property type="chains" value="A/B/C/D=1-292"/>
</dbReference>
<dbReference type="PDBsum" id="1IIM"/>
<dbReference type="PDBsum" id="1IIN"/>
<dbReference type="PDBsum" id="1MP3"/>
<dbReference type="PDBsum" id="1MP4"/>
<dbReference type="PDBsum" id="1MP5"/>
<dbReference type="PDBsum" id="3PKP"/>
<dbReference type="PDBsum" id="3PKQ"/>
<dbReference type="SMR" id="P26393"/>
<dbReference type="STRING" id="99287.STM2095"/>
<dbReference type="DrugBank" id="DB02452">
    <property type="generic name" value="Thymidine 5'-triphosphate"/>
</dbReference>
<dbReference type="DrugBank" id="DB01861">
    <property type="generic name" value="Uridine diphosphate glucose"/>
</dbReference>
<dbReference type="PaxDb" id="99287-STM2095"/>
<dbReference type="GeneID" id="1253616"/>
<dbReference type="KEGG" id="stm:STM2095"/>
<dbReference type="PATRIC" id="fig|99287.12.peg.2217"/>
<dbReference type="HOGENOM" id="CLU_029499_9_0_6"/>
<dbReference type="OMA" id="PFIMYLG"/>
<dbReference type="PhylomeDB" id="P26393"/>
<dbReference type="BioCyc" id="SENT99287:STM2095-MONOMER"/>
<dbReference type="SABIO-RK" id="P26393"/>
<dbReference type="UniPathway" id="UPA00124"/>
<dbReference type="UniPathway" id="UPA00281"/>
<dbReference type="EvolutionaryTrace" id="P26393"/>
<dbReference type="Proteomes" id="UP000001014">
    <property type="component" value="Chromosome"/>
</dbReference>
<dbReference type="GO" id="GO:0008879">
    <property type="term" value="F:glucose-1-phosphate thymidylyltransferase activity"/>
    <property type="evidence" value="ECO:0000314"/>
    <property type="project" value="UniProtKB"/>
</dbReference>
<dbReference type="GO" id="GO:0000287">
    <property type="term" value="F:magnesium ion binding"/>
    <property type="evidence" value="ECO:0000314"/>
    <property type="project" value="UniProtKB"/>
</dbReference>
<dbReference type="GO" id="GO:0019305">
    <property type="term" value="P:dTDP-rhamnose biosynthetic process"/>
    <property type="evidence" value="ECO:0007669"/>
    <property type="project" value="UniProtKB-UniPathway"/>
</dbReference>
<dbReference type="GO" id="GO:0009243">
    <property type="term" value="P:O antigen biosynthetic process"/>
    <property type="evidence" value="ECO:0007669"/>
    <property type="project" value="UniProtKB-UniPathway"/>
</dbReference>
<dbReference type="GO" id="GO:0000271">
    <property type="term" value="P:polysaccharide biosynthetic process"/>
    <property type="evidence" value="ECO:0000314"/>
    <property type="project" value="UniProtKB"/>
</dbReference>
<dbReference type="CDD" id="cd02538">
    <property type="entry name" value="G1P_TT_short"/>
    <property type="match status" value="1"/>
</dbReference>
<dbReference type="FunFam" id="3.90.550.10:FF:000023">
    <property type="entry name" value="Glucose-1-phosphate thymidylyltransferase"/>
    <property type="match status" value="1"/>
</dbReference>
<dbReference type="Gene3D" id="3.90.550.10">
    <property type="entry name" value="Spore Coat Polysaccharide Biosynthesis Protein SpsA, Chain A"/>
    <property type="match status" value="1"/>
</dbReference>
<dbReference type="InterPro" id="IPR005907">
    <property type="entry name" value="G1P_thy_trans_s"/>
</dbReference>
<dbReference type="InterPro" id="IPR005835">
    <property type="entry name" value="NTP_transferase_dom"/>
</dbReference>
<dbReference type="InterPro" id="IPR029044">
    <property type="entry name" value="Nucleotide-diphossugar_trans"/>
</dbReference>
<dbReference type="NCBIfam" id="NF012024">
    <property type="entry name" value="PRK15480.1"/>
    <property type="match status" value="1"/>
</dbReference>
<dbReference type="NCBIfam" id="TIGR01207">
    <property type="entry name" value="rmlA"/>
    <property type="match status" value="1"/>
</dbReference>
<dbReference type="PANTHER" id="PTHR43532">
    <property type="entry name" value="GLUCOSE-1-PHOSPHATE THYMIDYLYLTRANSFERASE"/>
    <property type="match status" value="1"/>
</dbReference>
<dbReference type="PANTHER" id="PTHR43532:SF1">
    <property type="entry name" value="GLUCOSE-1-PHOSPHATE THYMIDYLYLTRANSFERASE 1"/>
    <property type="match status" value="1"/>
</dbReference>
<dbReference type="Pfam" id="PF00483">
    <property type="entry name" value="NTP_transferase"/>
    <property type="match status" value="1"/>
</dbReference>
<dbReference type="SUPFAM" id="SSF53448">
    <property type="entry name" value="Nucleotide-diphospho-sugar transferases"/>
    <property type="match status" value="1"/>
</dbReference>
<feature type="chain" id="PRO_0000207995" description="Glucose-1-phosphate thymidylyltransferase">
    <location>
        <begin position="1"/>
        <end position="292"/>
    </location>
</feature>
<feature type="binding site" evidence="1">
    <location>
        <position position="111"/>
    </location>
    <ligand>
        <name>Mg(2+)</name>
        <dbReference type="ChEBI" id="CHEBI:18420"/>
    </ligand>
</feature>
<feature type="binding site" evidence="1">
    <location>
        <position position="226"/>
    </location>
    <ligand>
        <name>Mg(2+)</name>
        <dbReference type="ChEBI" id="CHEBI:18420"/>
    </ligand>
</feature>
<feature type="mutagenesis site" description="Two-fold increase in the conversion of 2-acetamido-2-deoxy-alpha-D-glucopyranosyl phosphate." evidence="2">
    <original>T</original>
    <variation>A</variation>
    <location>
        <position position="201"/>
    </location>
</feature>
<feature type="mutagenesis site" description="Is able to convert both 6-acetamido-6-deoxy-alpha-D-glucopyranosyl phosphate and alpha-D-glucopyranuronic acid 1-(dihydrogen phosphate), which are not accepted by the wild-type." evidence="2">
    <original>W</original>
    <variation>H</variation>
    <location>
        <position position="224"/>
    </location>
</feature>
<feature type="strand" evidence="7">
    <location>
        <begin position="5"/>
        <end position="9"/>
    </location>
</feature>
<feature type="helix" evidence="7">
    <location>
        <begin position="15"/>
        <end position="17"/>
    </location>
</feature>
<feature type="helix" evidence="7">
    <location>
        <begin position="20"/>
        <end position="22"/>
    </location>
</feature>
<feature type="helix" evidence="7">
    <location>
        <begin position="26"/>
        <end position="28"/>
    </location>
</feature>
<feature type="strand" evidence="7">
    <location>
        <begin position="29"/>
        <end position="31"/>
    </location>
</feature>
<feature type="helix" evidence="7">
    <location>
        <begin position="38"/>
        <end position="46"/>
    </location>
</feature>
<feature type="strand" evidence="7">
    <location>
        <begin position="51"/>
        <end position="56"/>
    </location>
</feature>
<feature type="turn" evidence="7">
    <location>
        <begin position="58"/>
        <end position="60"/>
    </location>
</feature>
<feature type="helix" evidence="7">
    <location>
        <begin position="61"/>
        <end position="68"/>
    </location>
</feature>
<feature type="helix" evidence="7">
    <location>
        <begin position="72"/>
        <end position="74"/>
    </location>
</feature>
<feature type="strand" evidence="7">
    <location>
        <begin position="77"/>
        <end position="82"/>
    </location>
</feature>
<feature type="strand" evidence="9">
    <location>
        <begin position="84"/>
        <end position="87"/>
    </location>
</feature>
<feature type="helix" evidence="7">
    <location>
        <begin position="89"/>
        <end position="91"/>
    </location>
</feature>
<feature type="helix" evidence="7">
    <location>
        <begin position="92"/>
        <end position="95"/>
    </location>
</feature>
<feature type="helix" evidence="7">
    <location>
        <begin position="97"/>
        <end position="100"/>
    </location>
</feature>
<feature type="strand" evidence="7">
    <location>
        <begin position="105"/>
        <end position="109"/>
    </location>
</feature>
<feature type="strand" evidence="7">
    <location>
        <begin position="112"/>
        <end position="115"/>
    </location>
</feature>
<feature type="helix" evidence="7">
    <location>
        <begin position="119"/>
        <end position="128"/>
    </location>
</feature>
<feature type="strand" evidence="7">
    <location>
        <begin position="131"/>
        <end position="139"/>
    </location>
</feature>
<feature type="helix" evidence="7">
    <location>
        <begin position="143"/>
        <end position="145"/>
    </location>
</feature>
<feature type="strand" evidence="7">
    <location>
        <begin position="146"/>
        <end position="151"/>
    </location>
</feature>
<feature type="strand" evidence="8">
    <location>
        <begin position="153"/>
        <end position="155"/>
    </location>
</feature>
<feature type="strand" evidence="7">
    <location>
        <begin position="157"/>
        <end position="163"/>
    </location>
</feature>
<feature type="strand" evidence="7">
    <location>
        <begin position="168"/>
        <end position="179"/>
    </location>
</feature>
<feature type="helix" evidence="7">
    <location>
        <begin position="183"/>
        <end position="189"/>
    </location>
</feature>
<feature type="helix" evidence="7">
    <location>
        <begin position="200"/>
        <end position="209"/>
    </location>
</feature>
<feature type="strand" evidence="7">
    <location>
        <begin position="213"/>
        <end position="217"/>
    </location>
</feature>
<feature type="strand" evidence="7">
    <location>
        <begin position="222"/>
        <end position="226"/>
    </location>
</feature>
<feature type="helix" evidence="7">
    <location>
        <begin position="230"/>
        <end position="247"/>
    </location>
</feature>
<feature type="helix" evidence="7">
    <location>
        <begin position="254"/>
        <end position="260"/>
    </location>
</feature>
<feature type="helix" evidence="7">
    <location>
        <begin position="266"/>
        <end position="273"/>
    </location>
</feature>
<feature type="helix" evidence="7">
    <location>
        <begin position="274"/>
        <end position="276"/>
    </location>
</feature>
<feature type="helix" evidence="7">
    <location>
        <begin position="280"/>
        <end position="288"/>
    </location>
</feature>
<comment type="function">
    <text evidence="3">Catalyzes the formation of dTDP-glucose, from dTTP and glucose 1-phosphate, as well as its pyrophosphorolysis. Is the first of four enzymes commited to biosynthesis of dTDP-L-rhamnose in S.typhimurium LT2. Is also able to convert non natural substrates such as a wide array of alpha-D-hexopyranosyl, deoxy-alpha-D-glucopyranosyl, aminodeoxy-alpha-D-hexopyranosyl and acetamidodeoxy-alpha-D-hexopyranosyl phosphates to their corresponding dTDP- and UDP-nucleotide sugars.</text>
</comment>
<comment type="catalytic activity">
    <reaction evidence="3">
        <text>dTTP + alpha-D-glucose 1-phosphate + H(+) = dTDP-alpha-D-glucose + diphosphate</text>
        <dbReference type="Rhea" id="RHEA:15225"/>
        <dbReference type="ChEBI" id="CHEBI:15378"/>
        <dbReference type="ChEBI" id="CHEBI:33019"/>
        <dbReference type="ChEBI" id="CHEBI:37568"/>
        <dbReference type="ChEBI" id="CHEBI:57477"/>
        <dbReference type="ChEBI" id="CHEBI:58601"/>
        <dbReference type="EC" id="2.7.7.24"/>
    </reaction>
</comment>
<comment type="cofactor">
    <cofactor evidence="5">
        <name>Mg(2+)</name>
        <dbReference type="ChEBI" id="CHEBI:18420"/>
    </cofactor>
    <text evidence="5">Binds 1 Mg(2+) ion per subunit.</text>
</comment>
<comment type="biophysicochemical properties">
    <kinetics>
        <KM evidence="3">0.02 mM for dTTP</KM>
        <KM evidence="3">0.11 mM for alpha-D-glucose 1-phosphate</KM>
        <KM evidence="3">0.083 mM for dTDP-alpha-D-glucose</KM>
        <KM evidence="3">0.15 mM for diphosphate</KM>
        <KM>0.7 mM for dTTP</KM>
        <KM>0.3 mM for G1P</KM>
        <Vmax evidence="3">54.7 umol/min/mg enzyme for the formation of dTDP-alpha-D-glucose</Vmax>
        <Vmax evidence="3">329.0 umol/min/mg enzyme for the pyrophosphorolysis of dTDP-alpha-D-glucose</Vmax>
    </kinetics>
</comment>
<comment type="pathway">
    <text evidence="6">Carbohydrate biosynthesis; dTDP-L-rhamnose biosynthesis.</text>
</comment>
<comment type="pathway">
    <text>Bacterial outer membrane biogenesis; LPS O-antigen biosynthesis.</text>
</comment>
<comment type="subunit">
    <text>Homotetramer.</text>
</comment>
<comment type="similarity">
    <text evidence="5">Belongs to the glucose-1-phosphate thymidylyltransferase family.</text>
</comment>
<comment type="caution">
    <text evidence="5">The position of the magnesium ion observed in the crystallographic structure is different from that observed in the structure of E.coli RmlA2 (RffH) and does not seem to correspond to the binding site for the catalytically essential magnesium ion. Therefore, we choose to propagate in the feature lines the positions found in the E.coli structure.</text>
</comment>
<protein>
    <recommendedName>
        <fullName evidence="4">Glucose-1-phosphate thymidylyltransferase</fullName>
        <ecNumber evidence="3">2.7.7.24</ecNumber>
    </recommendedName>
    <alternativeName>
        <fullName>dTDP-glucose pyrophosphorylase</fullName>
        <shortName>Ep</shortName>
    </alternativeName>
    <alternativeName>
        <fullName>dTDP-glucose synthase</fullName>
    </alternativeName>
</protein>
<sequence>MKTRKGIILAGGSGTRLYPVTMAVSKQLLPIYDKPMIYYPLSTLMLAGIRDILIISTPQDTPRFQQLLGDGSQWGLNLQYKVQPSPDGLAQAFIIGEEFIGHDDCALVLGDNIFYGHDLPKLMEAAVNKESGATVFAYHVNDPERYGVVEFDQKGTAVSLEEKPLQPKSNYAVTGLYFYDNSVVEMAKNLKPSARGELEITDINRIYMEQGRLSVAMMGRGYAWLDTGTHQSLIEASNFIATIEERQGLKVSCPEEIAFRKNFINAQQVIELAGPLSKNDYGKYLLKMVKGL</sequence>
<organism>
    <name type="scientific">Salmonella typhimurium (strain LT2 / SGSC1412 / ATCC 700720)</name>
    <dbReference type="NCBI Taxonomy" id="99287"/>
    <lineage>
        <taxon>Bacteria</taxon>
        <taxon>Pseudomonadati</taxon>
        <taxon>Pseudomonadota</taxon>
        <taxon>Gammaproteobacteria</taxon>
        <taxon>Enterobacterales</taxon>
        <taxon>Enterobacteriaceae</taxon>
        <taxon>Salmonella</taxon>
    </lineage>
</organism>
<accession>P26393</accession>